<accession>Q9Z9K7</accession>
<accession>Q9JPX9</accession>
<organism>
    <name type="scientific">Halalkalibacterium halodurans (strain ATCC BAA-125 / DSM 18197 / FERM 7344 / JCM 9153 / C-125)</name>
    <name type="common">Bacillus halodurans</name>
    <dbReference type="NCBI Taxonomy" id="272558"/>
    <lineage>
        <taxon>Bacteria</taxon>
        <taxon>Bacillati</taxon>
        <taxon>Bacillota</taxon>
        <taxon>Bacilli</taxon>
        <taxon>Bacillales</taxon>
        <taxon>Bacillaceae</taxon>
        <taxon>Halalkalibacterium (ex Joshi et al. 2022)</taxon>
    </lineage>
</organism>
<keyword id="KW-1185">Reference proteome</keyword>
<keyword id="KW-0687">Ribonucleoprotein</keyword>
<keyword id="KW-0689">Ribosomal protein</keyword>
<keyword id="KW-0694">RNA-binding</keyword>
<keyword id="KW-0699">rRNA-binding</keyword>
<keyword id="KW-0820">tRNA-binding</keyword>
<gene>
    <name evidence="1" type="primary">rplP</name>
    <name type="ordered locus">BH0141</name>
</gene>
<protein>
    <recommendedName>
        <fullName evidence="1">Large ribosomal subunit protein uL16</fullName>
    </recommendedName>
    <alternativeName>
        <fullName evidence="2">50S ribosomal protein L16</fullName>
    </alternativeName>
</protein>
<sequence>MLMPKRVKFRREHRGKMRGRAKGGTEVHFGEYGLQALEASWITNRQIEAARIAMTRYMKRGGKVWIKIFPSKPYTAKPLEVRMGSGKGAPEGWVAVVKPGKVMFEISGVSEEVAREALRLASHKLPVKCKFVKREEVGGDANEN</sequence>
<evidence type="ECO:0000255" key="1">
    <source>
        <dbReference type="HAMAP-Rule" id="MF_01342"/>
    </source>
</evidence>
<evidence type="ECO:0000305" key="2"/>
<comment type="function">
    <text evidence="1">Binds 23S rRNA and is also seen to make contacts with the A and possibly P site tRNAs.</text>
</comment>
<comment type="subunit">
    <text evidence="1">Part of the 50S ribosomal subunit.</text>
</comment>
<comment type="similarity">
    <text evidence="1">Belongs to the universal ribosomal protein uL16 family.</text>
</comment>
<dbReference type="EMBL" id="AB017508">
    <property type="protein sequence ID" value="BAA75278.1"/>
    <property type="molecule type" value="Genomic_DNA"/>
</dbReference>
<dbReference type="EMBL" id="BA000004">
    <property type="protein sequence ID" value="BAB03860.1"/>
    <property type="molecule type" value="Genomic_DNA"/>
</dbReference>
<dbReference type="PIR" id="T44390">
    <property type="entry name" value="T44390"/>
</dbReference>
<dbReference type="RefSeq" id="WP_010896324.1">
    <property type="nucleotide sequence ID" value="NC_002570.2"/>
</dbReference>
<dbReference type="SMR" id="Q9Z9K7"/>
<dbReference type="STRING" id="272558.gene:10725981"/>
<dbReference type="GeneID" id="87595682"/>
<dbReference type="KEGG" id="bha:BH0141"/>
<dbReference type="eggNOG" id="COG0197">
    <property type="taxonomic scope" value="Bacteria"/>
</dbReference>
<dbReference type="HOGENOM" id="CLU_078858_2_1_9"/>
<dbReference type="OrthoDB" id="9802589at2"/>
<dbReference type="Proteomes" id="UP000001258">
    <property type="component" value="Chromosome"/>
</dbReference>
<dbReference type="GO" id="GO:0022625">
    <property type="term" value="C:cytosolic large ribosomal subunit"/>
    <property type="evidence" value="ECO:0007669"/>
    <property type="project" value="TreeGrafter"/>
</dbReference>
<dbReference type="GO" id="GO:0019843">
    <property type="term" value="F:rRNA binding"/>
    <property type="evidence" value="ECO:0007669"/>
    <property type="project" value="UniProtKB-UniRule"/>
</dbReference>
<dbReference type="GO" id="GO:0003735">
    <property type="term" value="F:structural constituent of ribosome"/>
    <property type="evidence" value="ECO:0007669"/>
    <property type="project" value="InterPro"/>
</dbReference>
<dbReference type="GO" id="GO:0000049">
    <property type="term" value="F:tRNA binding"/>
    <property type="evidence" value="ECO:0007669"/>
    <property type="project" value="UniProtKB-KW"/>
</dbReference>
<dbReference type="GO" id="GO:0006412">
    <property type="term" value="P:translation"/>
    <property type="evidence" value="ECO:0007669"/>
    <property type="project" value="UniProtKB-UniRule"/>
</dbReference>
<dbReference type="CDD" id="cd01433">
    <property type="entry name" value="Ribosomal_L16_L10e"/>
    <property type="match status" value="1"/>
</dbReference>
<dbReference type="FunFam" id="3.90.1170.10:FF:000001">
    <property type="entry name" value="50S ribosomal protein L16"/>
    <property type="match status" value="1"/>
</dbReference>
<dbReference type="Gene3D" id="3.90.1170.10">
    <property type="entry name" value="Ribosomal protein L10e/L16"/>
    <property type="match status" value="1"/>
</dbReference>
<dbReference type="HAMAP" id="MF_01342">
    <property type="entry name" value="Ribosomal_uL16"/>
    <property type="match status" value="1"/>
</dbReference>
<dbReference type="InterPro" id="IPR047873">
    <property type="entry name" value="Ribosomal_uL16"/>
</dbReference>
<dbReference type="InterPro" id="IPR000114">
    <property type="entry name" value="Ribosomal_uL16_bact-type"/>
</dbReference>
<dbReference type="InterPro" id="IPR020798">
    <property type="entry name" value="Ribosomal_uL16_CS"/>
</dbReference>
<dbReference type="InterPro" id="IPR016180">
    <property type="entry name" value="Ribosomal_uL16_dom"/>
</dbReference>
<dbReference type="InterPro" id="IPR036920">
    <property type="entry name" value="Ribosomal_uL16_sf"/>
</dbReference>
<dbReference type="NCBIfam" id="TIGR01164">
    <property type="entry name" value="rplP_bact"/>
    <property type="match status" value="1"/>
</dbReference>
<dbReference type="PANTHER" id="PTHR12220">
    <property type="entry name" value="50S/60S RIBOSOMAL PROTEIN L16"/>
    <property type="match status" value="1"/>
</dbReference>
<dbReference type="PANTHER" id="PTHR12220:SF13">
    <property type="entry name" value="LARGE RIBOSOMAL SUBUNIT PROTEIN UL16M"/>
    <property type="match status" value="1"/>
</dbReference>
<dbReference type="Pfam" id="PF00252">
    <property type="entry name" value="Ribosomal_L16"/>
    <property type="match status" value="1"/>
</dbReference>
<dbReference type="PRINTS" id="PR00060">
    <property type="entry name" value="RIBOSOMALL16"/>
</dbReference>
<dbReference type="SUPFAM" id="SSF54686">
    <property type="entry name" value="Ribosomal protein L16p/L10e"/>
    <property type="match status" value="1"/>
</dbReference>
<dbReference type="PROSITE" id="PS00586">
    <property type="entry name" value="RIBOSOMAL_L16_1"/>
    <property type="match status" value="1"/>
</dbReference>
<dbReference type="PROSITE" id="PS00701">
    <property type="entry name" value="RIBOSOMAL_L16_2"/>
    <property type="match status" value="1"/>
</dbReference>
<proteinExistence type="inferred from homology"/>
<reference key="1">
    <citation type="journal article" date="1999" name="Biosci. Biotechnol. Biochem.">
        <title>Sequence analysis of a 32-kb region including the major ribosomal protein gene clusters from alkaliphilic Bacillus sp. strain C-125.</title>
        <authorList>
            <person name="Takami H."/>
            <person name="Takaki Y."/>
            <person name="Nakasone K."/>
            <person name="Hirama C."/>
            <person name="Inoue A."/>
            <person name="Horikoshi K."/>
        </authorList>
    </citation>
    <scope>NUCLEOTIDE SEQUENCE [GENOMIC DNA]</scope>
    <source>
        <strain>ATCC BAA-125 / DSM 18197 / FERM 7344 / JCM 9153 / C-125</strain>
    </source>
</reference>
<reference key="2">
    <citation type="journal article" date="2000" name="Nucleic Acids Res.">
        <title>Complete genome sequence of the alkaliphilic bacterium Bacillus halodurans and genomic sequence comparison with Bacillus subtilis.</title>
        <authorList>
            <person name="Takami H."/>
            <person name="Nakasone K."/>
            <person name="Takaki Y."/>
            <person name="Maeno G."/>
            <person name="Sasaki R."/>
            <person name="Masui N."/>
            <person name="Fuji F."/>
            <person name="Hirama C."/>
            <person name="Nakamura Y."/>
            <person name="Ogasawara N."/>
            <person name="Kuhara S."/>
            <person name="Horikoshi K."/>
        </authorList>
    </citation>
    <scope>NUCLEOTIDE SEQUENCE [LARGE SCALE GENOMIC DNA]</scope>
    <source>
        <strain>ATCC BAA-125 / DSM 18197 / FERM 7344 / JCM 9153 / C-125</strain>
    </source>
</reference>
<feature type="chain" id="PRO_0000062040" description="Large ribosomal subunit protein uL16">
    <location>
        <begin position="1"/>
        <end position="144"/>
    </location>
</feature>
<name>RL16_HALH5</name>